<comment type="function">
    <text evidence="1">Essential for the assembly of the photosystem I (PSI) complex. May act as a chaperone-like factor to guide the assembly of the PSI subunits.</text>
</comment>
<comment type="subcellular location">
    <subcellularLocation>
        <location evidence="1">Plastid</location>
        <location evidence="1">Chloroplast thylakoid membrane</location>
        <topology evidence="1">Peripheral membrane protein</topology>
    </subcellularLocation>
</comment>
<comment type="similarity">
    <text evidence="1">Belongs to the Ycf3 family.</text>
</comment>
<accession>A1XGN9</accession>
<sequence>MPRSRINGNFIDKTFSIVANILLRIIPTTSGEKEAFTYYRDGMSAQSEGNYAEALQNYYEATRLEIDPYDRSYILYNIGLIHTSNGEHTKALEYYFRALERNPFLPQAFNNMAVICHYRGEQAIRQGDSEIAEAWSDQAAEYWKQAIALTPGNYIEAHNWLKITRRFE</sequence>
<reference key="1">
    <citation type="journal article" date="2007" name="BMC Genomics">
        <title>Comparative chloroplast genomics: analyses including new sequences from the angiosperms Nuphar advena and Ranunculus macranthus.</title>
        <authorList>
            <person name="Raubeson L.A."/>
            <person name="Peery R."/>
            <person name="Chumley T.W."/>
            <person name="Dziubek C."/>
            <person name="Fourcade H.M."/>
            <person name="Boore J.L."/>
            <person name="Jansen R.K."/>
        </authorList>
    </citation>
    <scope>NUCLEOTIDE SEQUENCE [LARGE SCALE GENOMIC DNA]</scope>
</reference>
<dbReference type="EMBL" id="DQ359689">
    <property type="protein sequence ID" value="ABC70757.1"/>
    <property type="molecule type" value="Genomic_DNA"/>
</dbReference>
<dbReference type="RefSeq" id="YP_001004187.1">
    <property type="nucleotide sequence ID" value="NC_008796.1"/>
</dbReference>
<dbReference type="SMR" id="A1XGN9"/>
<dbReference type="GeneID" id="4712112"/>
<dbReference type="GO" id="GO:0009535">
    <property type="term" value="C:chloroplast thylakoid membrane"/>
    <property type="evidence" value="ECO:0007669"/>
    <property type="project" value="UniProtKB-SubCell"/>
</dbReference>
<dbReference type="GO" id="GO:0015979">
    <property type="term" value="P:photosynthesis"/>
    <property type="evidence" value="ECO:0007669"/>
    <property type="project" value="UniProtKB-UniRule"/>
</dbReference>
<dbReference type="FunFam" id="1.25.40.10:FF:000004">
    <property type="entry name" value="Photosystem I assembly protein Ycf3"/>
    <property type="match status" value="1"/>
</dbReference>
<dbReference type="Gene3D" id="1.25.40.10">
    <property type="entry name" value="Tetratricopeptide repeat domain"/>
    <property type="match status" value="1"/>
</dbReference>
<dbReference type="HAMAP" id="MF_00439">
    <property type="entry name" value="Ycf3"/>
    <property type="match status" value="1"/>
</dbReference>
<dbReference type="InterPro" id="IPR022818">
    <property type="entry name" value="PSI_Ycf3_assembly"/>
</dbReference>
<dbReference type="InterPro" id="IPR011990">
    <property type="entry name" value="TPR-like_helical_dom_sf"/>
</dbReference>
<dbReference type="InterPro" id="IPR019734">
    <property type="entry name" value="TPR_rpt"/>
</dbReference>
<dbReference type="InterPro" id="IPR051685">
    <property type="entry name" value="Ycf3/AcsC/BcsC/TPR_MFPF"/>
</dbReference>
<dbReference type="NCBIfam" id="NF002725">
    <property type="entry name" value="PRK02603.1"/>
    <property type="match status" value="1"/>
</dbReference>
<dbReference type="PANTHER" id="PTHR44943">
    <property type="entry name" value="CELLULOSE SYNTHASE OPERON PROTEIN C"/>
    <property type="match status" value="1"/>
</dbReference>
<dbReference type="PANTHER" id="PTHR44943:SF8">
    <property type="entry name" value="TPR REPEAT-CONTAINING PROTEIN MJ0263"/>
    <property type="match status" value="1"/>
</dbReference>
<dbReference type="Pfam" id="PF00515">
    <property type="entry name" value="TPR_1"/>
    <property type="match status" value="1"/>
</dbReference>
<dbReference type="SMART" id="SM00028">
    <property type="entry name" value="TPR"/>
    <property type="match status" value="3"/>
</dbReference>
<dbReference type="SUPFAM" id="SSF48452">
    <property type="entry name" value="TPR-like"/>
    <property type="match status" value="1"/>
</dbReference>
<dbReference type="PROSITE" id="PS50005">
    <property type="entry name" value="TPR"/>
    <property type="match status" value="3"/>
</dbReference>
<dbReference type="PROSITE" id="PS50293">
    <property type="entry name" value="TPR_REGION"/>
    <property type="match status" value="1"/>
</dbReference>
<proteinExistence type="inferred from homology"/>
<protein>
    <recommendedName>
        <fullName evidence="1">Photosystem I assembly protein Ycf3</fullName>
    </recommendedName>
</protein>
<gene>
    <name evidence="1" type="primary">ycf3</name>
</gene>
<organism>
    <name type="scientific">Ranunculus macranthus</name>
    <name type="common">Large buttercup</name>
    <dbReference type="NCBI Taxonomy" id="334596"/>
    <lineage>
        <taxon>Eukaryota</taxon>
        <taxon>Viridiplantae</taxon>
        <taxon>Streptophyta</taxon>
        <taxon>Embryophyta</taxon>
        <taxon>Tracheophyta</taxon>
        <taxon>Spermatophyta</taxon>
        <taxon>Magnoliopsida</taxon>
        <taxon>Ranunculales</taxon>
        <taxon>Ranunculaceae</taxon>
        <taxon>Ranunculoideae</taxon>
        <taxon>Ranunculeae</taxon>
        <taxon>Ranunculus</taxon>
    </lineage>
</organism>
<feature type="chain" id="PRO_0000325075" description="Photosystem I assembly protein Ycf3">
    <location>
        <begin position="1"/>
        <end position="168"/>
    </location>
</feature>
<feature type="repeat" description="TPR 1">
    <location>
        <begin position="35"/>
        <end position="68"/>
    </location>
</feature>
<feature type="repeat" description="TPR 2">
    <location>
        <begin position="72"/>
        <end position="105"/>
    </location>
</feature>
<feature type="repeat" description="TPR 3">
    <location>
        <begin position="120"/>
        <end position="153"/>
    </location>
</feature>
<evidence type="ECO:0000255" key="1">
    <source>
        <dbReference type="HAMAP-Rule" id="MF_00439"/>
    </source>
</evidence>
<geneLocation type="chloroplast"/>
<keyword id="KW-0150">Chloroplast</keyword>
<keyword id="KW-0472">Membrane</keyword>
<keyword id="KW-0602">Photosynthesis</keyword>
<keyword id="KW-0934">Plastid</keyword>
<keyword id="KW-0677">Repeat</keyword>
<keyword id="KW-0793">Thylakoid</keyword>
<keyword id="KW-0802">TPR repeat</keyword>
<name>YCF3_RANMC</name>